<proteinExistence type="inferred from homology"/>
<gene>
    <name type="primary">TDA11</name>
    <name type="ORF">PGUG_02585</name>
</gene>
<feature type="chain" id="PRO_0000410759" description="Topoisomerase I damage affected protein 11">
    <location>
        <begin position="1"/>
        <end position="391"/>
    </location>
</feature>
<feature type="region of interest" description="Disordered" evidence="2">
    <location>
        <begin position="1"/>
        <end position="107"/>
    </location>
</feature>
<feature type="region of interest" description="Disordered" evidence="2">
    <location>
        <begin position="181"/>
        <end position="235"/>
    </location>
</feature>
<feature type="region of interest" description="Disordered" evidence="2">
    <location>
        <begin position="265"/>
        <end position="318"/>
    </location>
</feature>
<feature type="region of interest" description="Disordered" evidence="2">
    <location>
        <begin position="338"/>
        <end position="391"/>
    </location>
</feature>
<feature type="compositionally biased region" description="Low complexity" evidence="2">
    <location>
        <begin position="14"/>
        <end position="31"/>
    </location>
</feature>
<feature type="compositionally biased region" description="Low complexity" evidence="2">
    <location>
        <begin position="48"/>
        <end position="58"/>
    </location>
</feature>
<feature type="compositionally biased region" description="Basic residues" evidence="2">
    <location>
        <begin position="59"/>
        <end position="77"/>
    </location>
</feature>
<feature type="compositionally biased region" description="Polar residues" evidence="2">
    <location>
        <begin position="182"/>
        <end position="194"/>
    </location>
</feature>
<feature type="compositionally biased region" description="Polar residues" evidence="2">
    <location>
        <begin position="265"/>
        <end position="286"/>
    </location>
</feature>
<feature type="compositionally biased region" description="Low complexity" evidence="2">
    <location>
        <begin position="302"/>
        <end position="312"/>
    </location>
</feature>
<feature type="compositionally biased region" description="Basic and acidic residues" evidence="2">
    <location>
        <begin position="338"/>
        <end position="351"/>
    </location>
</feature>
<feature type="compositionally biased region" description="Polar residues" evidence="2">
    <location>
        <begin position="354"/>
        <end position="367"/>
    </location>
</feature>
<accession>A5DH34</accession>
<name>TDA11_PICGU</name>
<organism>
    <name type="scientific">Meyerozyma guilliermondii (strain ATCC 6260 / CBS 566 / DSM 6381 / JCM 1539 / NBRC 10279 / NRRL Y-324)</name>
    <name type="common">Yeast</name>
    <name type="synonym">Candida guilliermondii</name>
    <dbReference type="NCBI Taxonomy" id="294746"/>
    <lineage>
        <taxon>Eukaryota</taxon>
        <taxon>Fungi</taxon>
        <taxon>Dikarya</taxon>
        <taxon>Ascomycota</taxon>
        <taxon>Saccharomycotina</taxon>
        <taxon>Pichiomycetes</taxon>
        <taxon>Debaryomycetaceae</taxon>
        <taxon>Meyerozyma</taxon>
    </lineage>
</organism>
<sequence>MDLTPSPRKHRSVSHSQSSDSGPPSSTKSNSGVPAGSNRKGFNINIAVSPISVSSPPVSHKHTLTRSHSHSSKHRRGSSASTNNPLPQLLEDADGPQLPEWPQPANESQGLRYNLELPSDEHLASLDIDDQLKFLALKEMGIVELKDKISQLNSILHKGEKDLHRLRELVQRSLYKEMSAGYTGSSKHVRQSSNPRDEAIASTKNRTRRRTLSSSSSPSKYLPVPEQSEPDSKSRLWSNLSKPLGFIQQFDSMLQNEFERSLIPQVSNSANPQPRTSEESYQSPLRSRSKNNDVDLPTEWTSSRSSSPQRASRNPEEMFQAVSSSIWSFVNDVRENMLPPREEEEKDKELYNLDNGSTVSVENMNNSDYDETTTETLPRRRSRQNSNAIDK</sequence>
<dbReference type="EMBL" id="CH408157">
    <property type="protein sequence ID" value="EDK38487.2"/>
    <property type="molecule type" value="Genomic_DNA"/>
</dbReference>
<dbReference type="RefSeq" id="XP_001484856.1">
    <property type="nucleotide sequence ID" value="XM_001484806.1"/>
</dbReference>
<dbReference type="SMR" id="A5DH34"/>
<dbReference type="FunCoup" id="A5DH34">
    <property type="interactions" value="16"/>
</dbReference>
<dbReference type="GeneID" id="5126667"/>
<dbReference type="KEGG" id="pgu:PGUG_02585"/>
<dbReference type="VEuPathDB" id="FungiDB:PGUG_02585"/>
<dbReference type="eggNOG" id="ENOG502SETW">
    <property type="taxonomic scope" value="Eukaryota"/>
</dbReference>
<dbReference type="HOGENOM" id="CLU_046869_1_0_1"/>
<dbReference type="InParanoid" id="A5DH34"/>
<dbReference type="OMA" id="EMCIVEL"/>
<dbReference type="OrthoDB" id="4036304at2759"/>
<dbReference type="Proteomes" id="UP000001997">
    <property type="component" value="Unassembled WGS sequence"/>
</dbReference>
<dbReference type="GO" id="GO:0005737">
    <property type="term" value="C:cytoplasm"/>
    <property type="evidence" value="ECO:0007669"/>
    <property type="project" value="UniProtKB-SubCell"/>
</dbReference>
<reference key="1">
    <citation type="journal article" date="2009" name="Nature">
        <title>Evolution of pathogenicity and sexual reproduction in eight Candida genomes.</title>
        <authorList>
            <person name="Butler G."/>
            <person name="Rasmussen M.D."/>
            <person name="Lin M.F."/>
            <person name="Santos M.A.S."/>
            <person name="Sakthikumar S."/>
            <person name="Munro C.A."/>
            <person name="Rheinbay E."/>
            <person name="Grabherr M."/>
            <person name="Forche A."/>
            <person name="Reedy J.L."/>
            <person name="Agrafioti I."/>
            <person name="Arnaud M.B."/>
            <person name="Bates S."/>
            <person name="Brown A.J.P."/>
            <person name="Brunke S."/>
            <person name="Costanzo M.C."/>
            <person name="Fitzpatrick D.A."/>
            <person name="de Groot P.W.J."/>
            <person name="Harris D."/>
            <person name="Hoyer L.L."/>
            <person name="Hube B."/>
            <person name="Klis F.M."/>
            <person name="Kodira C."/>
            <person name="Lennard N."/>
            <person name="Logue M.E."/>
            <person name="Martin R."/>
            <person name="Neiman A.M."/>
            <person name="Nikolaou E."/>
            <person name="Quail M.A."/>
            <person name="Quinn J."/>
            <person name="Santos M.C."/>
            <person name="Schmitzberger F.F."/>
            <person name="Sherlock G."/>
            <person name="Shah P."/>
            <person name="Silverstein K.A.T."/>
            <person name="Skrzypek M.S."/>
            <person name="Soll D."/>
            <person name="Staggs R."/>
            <person name="Stansfield I."/>
            <person name="Stumpf M.P.H."/>
            <person name="Sudbery P.E."/>
            <person name="Srikantha T."/>
            <person name="Zeng Q."/>
            <person name="Berman J."/>
            <person name="Berriman M."/>
            <person name="Heitman J."/>
            <person name="Gow N.A.R."/>
            <person name="Lorenz M.C."/>
            <person name="Birren B.W."/>
            <person name="Kellis M."/>
            <person name="Cuomo C.A."/>
        </authorList>
    </citation>
    <scope>NUCLEOTIDE SEQUENCE [LARGE SCALE GENOMIC DNA]</scope>
    <source>
        <strain>ATCC 6260 / CBS 566 / DSM 6381 / JCM 1539 / NBRC 10279 / NRRL Y-324</strain>
    </source>
</reference>
<keyword id="KW-0963">Cytoplasm</keyword>
<keyword id="KW-1185">Reference proteome</keyword>
<protein>
    <recommendedName>
        <fullName>Topoisomerase I damage affected protein 11</fullName>
    </recommendedName>
</protein>
<evidence type="ECO:0000250" key="1"/>
<evidence type="ECO:0000256" key="2">
    <source>
        <dbReference type="SAM" id="MobiDB-lite"/>
    </source>
</evidence>
<evidence type="ECO:0000305" key="3"/>
<comment type="subcellular location">
    <subcellularLocation>
        <location evidence="1">Cytoplasm</location>
    </subcellularLocation>
</comment>
<comment type="similarity">
    <text evidence="3">Belongs to the TDA11 family.</text>
</comment>